<sequence length="355" mass="38621">MWNKNRLTQMLSIEYPIIQAGMAGSTTPKLVASVSNSGGLGTIGAGYFNTQQLEDEIDYVRQLTSNSFGVNVFVPSQQSYTSSQIENMNAWLKPYRRALHLEEPVVKITEEQQFKCHIDTIIKKQVPVCCFTFGIPNESIIKRLKEANIKLIGTATSVDEAIANEKAGMDAIVAQGSEAGGHRGSFLKPKNQLPMVGTISLVPQIVDVVSIPVIAAGGIMDGRGVLASIVLGAEGVQMGTAFLTSQDSNASELLRDAIINSKETDTVVTKAFSGKLARGINNRFIEEMSQYEGDIPDYPIQNELTSSIRKAAANIGDKELTHMWSGQSPRLATTHPANTIMSNIINQINQIMQYK</sequence>
<keyword id="KW-0216">Detoxification</keyword>
<keyword id="KW-0285">Flavoprotein</keyword>
<keyword id="KW-0288">FMN</keyword>
<keyword id="KW-0503">Monooxygenase</keyword>
<keyword id="KW-0547">Nucleotide-binding</keyword>
<keyword id="KW-0560">Oxidoreductase</keyword>
<protein>
    <recommendedName>
        <fullName>Probable nitronate monooxygenase</fullName>
        <shortName>NMO</shortName>
        <ecNumber evidence="2">1.13.12.-</ecNumber>
    </recommendedName>
    <alternativeName>
        <fullName>Propionate 3-nitronate monooxygenase</fullName>
        <shortName>P3N monooxygenase</shortName>
    </alternativeName>
</protein>
<comment type="function">
    <text evidence="2">Nitronate monooxygenase that uses molecular oxygen to catalyze the oxidative denitrification of alkyl nitronates. Acts on propionate 3-nitronate (P3N), the presumed physiological substrate. Probably functions in the detoxification of P3N, a metabolic poison produced by plants and fungi as a defense mechanism.</text>
</comment>
<comment type="catalytic activity">
    <reaction evidence="1">
        <text>3 propionate 3-nitronate + 3 O2 + H2O = 3 3-oxopropanoate + 2 nitrate + nitrite + H2O2 + 3 H(+)</text>
        <dbReference type="Rhea" id="RHEA:57332"/>
        <dbReference type="ChEBI" id="CHEBI:15377"/>
        <dbReference type="ChEBI" id="CHEBI:15378"/>
        <dbReference type="ChEBI" id="CHEBI:15379"/>
        <dbReference type="ChEBI" id="CHEBI:16240"/>
        <dbReference type="ChEBI" id="CHEBI:16301"/>
        <dbReference type="ChEBI" id="CHEBI:17632"/>
        <dbReference type="ChEBI" id="CHEBI:33190"/>
        <dbReference type="ChEBI" id="CHEBI:136067"/>
    </reaction>
</comment>
<comment type="cofactor">
    <cofactor evidence="2">
        <name>FMN</name>
        <dbReference type="ChEBI" id="CHEBI:58210"/>
    </cofactor>
    <text evidence="2">Binds 1 FMN per subunit.</text>
</comment>
<comment type="miscellaneous">
    <text evidence="3">P3N is a potent irreversible inhibitor of the key enzyme succinate dehydrogenase in the Krebs cycle and electron transport chain. P3N has been shown to be a toxic metabolite to bacteria, plants, fungi, mammals or any organism that uses succinate dehydrogenase.</text>
</comment>
<comment type="similarity">
    <text evidence="3">Belongs to the nitronate monooxygenase family. NMO class I subfamily.</text>
</comment>
<accession>Q6GIG7</accession>
<proteinExistence type="inferred from homology"/>
<dbReference type="EC" id="1.13.12.-" evidence="2"/>
<dbReference type="EMBL" id="BX571856">
    <property type="protein sequence ID" value="CAG39889.1"/>
    <property type="molecule type" value="Genomic_DNA"/>
</dbReference>
<dbReference type="RefSeq" id="WP_000267243.1">
    <property type="nucleotide sequence ID" value="NC_002952.2"/>
</dbReference>
<dbReference type="SMR" id="Q6GIG7"/>
<dbReference type="KEGG" id="sar:SAR0883"/>
<dbReference type="HOGENOM" id="CLU_038732_5_1_9"/>
<dbReference type="Proteomes" id="UP000000596">
    <property type="component" value="Chromosome"/>
</dbReference>
<dbReference type="GO" id="GO:0018580">
    <property type="term" value="F:nitronate monooxygenase activity"/>
    <property type="evidence" value="ECO:0007669"/>
    <property type="project" value="InterPro"/>
</dbReference>
<dbReference type="GO" id="GO:0000166">
    <property type="term" value="F:nucleotide binding"/>
    <property type="evidence" value="ECO:0007669"/>
    <property type="project" value="UniProtKB-KW"/>
</dbReference>
<dbReference type="GO" id="GO:0009636">
    <property type="term" value="P:response to toxic substance"/>
    <property type="evidence" value="ECO:0007669"/>
    <property type="project" value="UniProtKB-KW"/>
</dbReference>
<dbReference type="CDD" id="cd04730">
    <property type="entry name" value="NPD_like"/>
    <property type="match status" value="1"/>
</dbReference>
<dbReference type="FunFam" id="3.20.20.70:FF:000154">
    <property type="entry name" value="Probable nitronate monooxygenase"/>
    <property type="match status" value="1"/>
</dbReference>
<dbReference type="Gene3D" id="3.20.20.70">
    <property type="entry name" value="Aldolase class I"/>
    <property type="match status" value="1"/>
</dbReference>
<dbReference type="InterPro" id="IPR013785">
    <property type="entry name" value="Aldolase_TIM"/>
</dbReference>
<dbReference type="InterPro" id="IPR004136">
    <property type="entry name" value="NMO"/>
</dbReference>
<dbReference type="PANTHER" id="PTHR42747">
    <property type="entry name" value="NITRONATE MONOOXYGENASE-RELATED"/>
    <property type="match status" value="1"/>
</dbReference>
<dbReference type="PANTHER" id="PTHR42747:SF3">
    <property type="entry name" value="NITRONATE MONOOXYGENASE-RELATED"/>
    <property type="match status" value="1"/>
</dbReference>
<dbReference type="Pfam" id="PF03060">
    <property type="entry name" value="NMO"/>
    <property type="match status" value="1"/>
</dbReference>
<dbReference type="SUPFAM" id="SSF51412">
    <property type="entry name" value="Inosine monophosphate dehydrogenase (IMPDH)"/>
    <property type="match status" value="1"/>
</dbReference>
<feature type="chain" id="PRO_0000360894" description="Probable nitronate monooxygenase">
    <location>
        <begin position="1"/>
        <end position="355"/>
    </location>
</feature>
<feature type="binding site" evidence="2">
    <location>
        <position position="71"/>
    </location>
    <ligand>
        <name>FMN</name>
        <dbReference type="ChEBI" id="CHEBI:58210"/>
    </ligand>
</feature>
<feature type="binding site" evidence="2">
    <location>
        <position position="175"/>
    </location>
    <ligand>
        <name>FMN</name>
        <dbReference type="ChEBI" id="CHEBI:58210"/>
    </ligand>
</feature>
<feature type="binding site" evidence="2">
    <location>
        <position position="180"/>
    </location>
    <ligand>
        <name>FMN</name>
        <dbReference type="ChEBI" id="CHEBI:58210"/>
    </ligand>
</feature>
<feature type="binding site" evidence="2">
    <location>
        <position position="218"/>
    </location>
    <ligand>
        <name>FMN</name>
        <dbReference type="ChEBI" id="CHEBI:58210"/>
    </ligand>
</feature>
<feature type="binding site" evidence="2">
    <location>
        <begin position="237"/>
        <end position="240"/>
    </location>
    <ligand>
        <name>FMN</name>
        <dbReference type="ChEBI" id="CHEBI:58210"/>
    </ligand>
</feature>
<organism>
    <name type="scientific">Staphylococcus aureus (strain MRSA252)</name>
    <dbReference type="NCBI Taxonomy" id="282458"/>
    <lineage>
        <taxon>Bacteria</taxon>
        <taxon>Bacillati</taxon>
        <taxon>Bacillota</taxon>
        <taxon>Bacilli</taxon>
        <taxon>Bacillales</taxon>
        <taxon>Staphylococcaceae</taxon>
        <taxon>Staphylococcus</taxon>
    </lineage>
</organism>
<evidence type="ECO:0000250" key="1">
    <source>
        <dbReference type="UniProtKB" id="D0V3Y4"/>
    </source>
</evidence>
<evidence type="ECO:0000250" key="2">
    <source>
        <dbReference type="UniProtKB" id="Q9HWH9"/>
    </source>
</evidence>
<evidence type="ECO:0000305" key="3"/>
<name>NMO_STAAR</name>
<reference key="1">
    <citation type="journal article" date="2004" name="Proc. Natl. Acad. Sci. U.S.A.">
        <title>Complete genomes of two clinical Staphylococcus aureus strains: evidence for the rapid evolution of virulence and drug resistance.</title>
        <authorList>
            <person name="Holden M.T.G."/>
            <person name="Feil E.J."/>
            <person name="Lindsay J.A."/>
            <person name="Peacock S.J."/>
            <person name="Day N.P.J."/>
            <person name="Enright M.C."/>
            <person name="Foster T.J."/>
            <person name="Moore C.E."/>
            <person name="Hurst L."/>
            <person name="Atkin R."/>
            <person name="Barron A."/>
            <person name="Bason N."/>
            <person name="Bentley S.D."/>
            <person name="Chillingworth C."/>
            <person name="Chillingworth T."/>
            <person name="Churcher C."/>
            <person name="Clark L."/>
            <person name="Corton C."/>
            <person name="Cronin A."/>
            <person name="Doggett J."/>
            <person name="Dowd L."/>
            <person name="Feltwell T."/>
            <person name="Hance Z."/>
            <person name="Harris B."/>
            <person name="Hauser H."/>
            <person name="Holroyd S."/>
            <person name="Jagels K."/>
            <person name="James K.D."/>
            <person name="Lennard N."/>
            <person name="Line A."/>
            <person name="Mayes R."/>
            <person name="Moule S."/>
            <person name="Mungall K."/>
            <person name="Ormond D."/>
            <person name="Quail M.A."/>
            <person name="Rabbinowitsch E."/>
            <person name="Rutherford K.M."/>
            <person name="Sanders M."/>
            <person name="Sharp S."/>
            <person name="Simmonds M."/>
            <person name="Stevens K."/>
            <person name="Whitehead S."/>
            <person name="Barrell B.G."/>
            <person name="Spratt B.G."/>
            <person name="Parkhill J."/>
        </authorList>
    </citation>
    <scope>NUCLEOTIDE SEQUENCE [LARGE SCALE GENOMIC DNA]</scope>
    <source>
        <strain>MRSA252</strain>
    </source>
</reference>
<gene>
    <name type="ordered locus">SAR0883</name>
</gene>